<organism>
    <name type="scientific">Thalassiosira pseudonana</name>
    <name type="common">Marine diatom</name>
    <name type="synonym">Cyclotella nana</name>
    <dbReference type="NCBI Taxonomy" id="35128"/>
    <lineage>
        <taxon>Eukaryota</taxon>
        <taxon>Sar</taxon>
        <taxon>Stramenopiles</taxon>
        <taxon>Ochrophyta</taxon>
        <taxon>Bacillariophyta</taxon>
        <taxon>Coscinodiscophyceae</taxon>
        <taxon>Thalassiosirophycidae</taxon>
        <taxon>Thalassiosirales</taxon>
        <taxon>Thalassiosiraceae</taxon>
        <taxon>Thalassiosira</taxon>
    </lineage>
</organism>
<accession>A0T0Z4</accession>
<reference key="1">
    <citation type="journal article" date="2007" name="Mol. Genet. Genomics">
        <title>Chloroplast genomes of the diatoms Phaeodactylum tricornutum and Thalassiosira pseudonana: comparison with other plastid genomes of the red lineage.</title>
        <authorList>
            <person name="Oudot-Le Secq M.-P."/>
            <person name="Grimwood J."/>
            <person name="Shapiro H."/>
            <person name="Armbrust E.V."/>
            <person name="Bowler C."/>
            <person name="Green B.R."/>
        </authorList>
    </citation>
    <scope>NUCLEOTIDE SEQUENCE [LARGE SCALE GENOMIC DNA]</scope>
    <source>
        <strain>CCMP1335 / NEPCC58 / CCAP 1085/12</strain>
    </source>
</reference>
<feature type="chain" id="PRO_0000275698" description="DNA-directed RNA polymerase subunit alpha">
    <location>
        <begin position="1"/>
        <end position="313"/>
    </location>
</feature>
<feature type="region of interest" description="Alpha N-terminal domain (alpha-NTD)" evidence="1">
    <location>
        <begin position="1"/>
        <end position="229"/>
    </location>
</feature>
<feature type="region of interest" description="Alpha C-terminal domain (alpha-CTD)" evidence="1">
    <location>
        <begin position="243"/>
        <end position="313"/>
    </location>
</feature>
<comment type="function">
    <text evidence="1">DNA-dependent RNA polymerase catalyzes the transcription of DNA into RNA using the four ribonucleoside triphosphates as substrates.</text>
</comment>
<comment type="catalytic activity">
    <reaction evidence="1">
        <text>RNA(n) + a ribonucleoside 5'-triphosphate = RNA(n+1) + diphosphate</text>
        <dbReference type="Rhea" id="RHEA:21248"/>
        <dbReference type="Rhea" id="RHEA-COMP:14527"/>
        <dbReference type="Rhea" id="RHEA-COMP:17342"/>
        <dbReference type="ChEBI" id="CHEBI:33019"/>
        <dbReference type="ChEBI" id="CHEBI:61557"/>
        <dbReference type="ChEBI" id="CHEBI:140395"/>
        <dbReference type="EC" id="2.7.7.6"/>
    </reaction>
</comment>
<comment type="subunit">
    <text evidence="1">In plastids the minimal PEP RNA polymerase catalytic core is composed of four subunits: alpha, beta, beta', and beta''. When a (nuclear-encoded) sigma factor is associated with the core the holoenzyme is formed, which can initiate transcription.</text>
</comment>
<comment type="subcellular location">
    <subcellularLocation>
        <location>Plastid</location>
        <location>Chloroplast</location>
    </subcellularLocation>
</comment>
<comment type="domain">
    <text evidence="1">The N-terminal domain is essential for RNAP assembly and basal transcription, whereas the C-terminal domain is involved in interaction with transcriptional regulators and with upstream promoter elements.</text>
</comment>
<comment type="similarity">
    <text evidence="1">Belongs to the RNA polymerase alpha chain family.</text>
</comment>
<name>RPOA_THAPS</name>
<sequence>MNSSNLLMECIKSEKIESGPMYGQFLIDSLSSGQGITIGNLLRRVLLGDLQGTAITGVRIAGVKDEFSLIPGVREDILEILLNLKGIVLKSKTPNRQFGRLRLQGPAVITASSIQLPPEIEIINPNHYIATISSSHILEIEFKIESGSKYRLANELFSDKFEDFIETDAIFMPVQKVDFKVENVYDNSNNIKERLLIDIWTNGSISPEQAIFSGSNLIINLFKSIGEQKINKEKENIKEKNHIKPIDPYTHIAIEELQLSVRPYNCLKRAQINTIGDLLDYSPEKLLELKNFGRKSADEVFATLKNKLGIVLK</sequence>
<evidence type="ECO:0000255" key="1">
    <source>
        <dbReference type="HAMAP-Rule" id="MF_00059"/>
    </source>
</evidence>
<proteinExistence type="inferred from homology"/>
<dbReference type="EC" id="2.7.7.6" evidence="1"/>
<dbReference type="EMBL" id="EF067921">
    <property type="protein sequence ID" value="ABK20829.1"/>
    <property type="molecule type" value="Genomic_DNA"/>
</dbReference>
<dbReference type="RefSeq" id="YP_874606.1">
    <property type="nucleotide sequence ID" value="NC_008589.1"/>
</dbReference>
<dbReference type="SMR" id="A0T0Z4"/>
<dbReference type="STRING" id="35128.A0T0Z4"/>
<dbReference type="GeneID" id="4524806"/>
<dbReference type="InParanoid" id="A0T0Z4"/>
<dbReference type="GO" id="GO:0009507">
    <property type="term" value="C:chloroplast"/>
    <property type="evidence" value="ECO:0007669"/>
    <property type="project" value="UniProtKB-SubCell"/>
</dbReference>
<dbReference type="GO" id="GO:0000428">
    <property type="term" value="C:DNA-directed RNA polymerase complex"/>
    <property type="evidence" value="ECO:0007669"/>
    <property type="project" value="UniProtKB-KW"/>
</dbReference>
<dbReference type="GO" id="GO:0005739">
    <property type="term" value="C:mitochondrion"/>
    <property type="evidence" value="ECO:0007669"/>
    <property type="project" value="GOC"/>
</dbReference>
<dbReference type="GO" id="GO:0003677">
    <property type="term" value="F:DNA binding"/>
    <property type="evidence" value="ECO:0007669"/>
    <property type="project" value="UniProtKB-UniRule"/>
</dbReference>
<dbReference type="GO" id="GO:0003899">
    <property type="term" value="F:DNA-directed RNA polymerase activity"/>
    <property type="evidence" value="ECO:0007669"/>
    <property type="project" value="UniProtKB-UniRule"/>
</dbReference>
<dbReference type="GO" id="GO:0046983">
    <property type="term" value="F:protein dimerization activity"/>
    <property type="evidence" value="ECO:0007669"/>
    <property type="project" value="InterPro"/>
</dbReference>
<dbReference type="GO" id="GO:0006351">
    <property type="term" value="P:DNA-templated transcription"/>
    <property type="evidence" value="ECO:0007669"/>
    <property type="project" value="UniProtKB-UniRule"/>
</dbReference>
<dbReference type="CDD" id="cd06928">
    <property type="entry name" value="RNAP_alpha_NTD"/>
    <property type="match status" value="1"/>
</dbReference>
<dbReference type="FunFam" id="2.170.120.12:FF:000001">
    <property type="entry name" value="DNA-directed RNA polymerase subunit alpha"/>
    <property type="match status" value="1"/>
</dbReference>
<dbReference type="Gene3D" id="1.10.150.20">
    <property type="entry name" value="5' to 3' exonuclease, C-terminal subdomain"/>
    <property type="match status" value="1"/>
</dbReference>
<dbReference type="Gene3D" id="2.170.120.12">
    <property type="entry name" value="DNA-directed RNA polymerase, insert domain"/>
    <property type="match status" value="1"/>
</dbReference>
<dbReference type="Gene3D" id="3.30.1360.10">
    <property type="entry name" value="RNA polymerase, RBP11-like subunit"/>
    <property type="match status" value="1"/>
</dbReference>
<dbReference type="HAMAP" id="MF_00059">
    <property type="entry name" value="RNApol_bact_RpoA"/>
    <property type="match status" value="1"/>
</dbReference>
<dbReference type="InterPro" id="IPR011262">
    <property type="entry name" value="DNA-dir_RNA_pol_insert"/>
</dbReference>
<dbReference type="InterPro" id="IPR011263">
    <property type="entry name" value="DNA-dir_RNA_pol_RpoA/D/Rpb3"/>
</dbReference>
<dbReference type="InterPro" id="IPR011773">
    <property type="entry name" value="DNA-dir_RpoA"/>
</dbReference>
<dbReference type="InterPro" id="IPR036603">
    <property type="entry name" value="RBP11-like"/>
</dbReference>
<dbReference type="InterPro" id="IPR011260">
    <property type="entry name" value="RNAP_asu_C"/>
</dbReference>
<dbReference type="InterPro" id="IPR036643">
    <property type="entry name" value="RNApol_insert_sf"/>
</dbReference>
<dbReference type="NCBIfam" id="NF003516">
    <property type="entry name" value="PRK05182.2-2"/>
    <property type="match status" value="1"/>
</dbReference>
<dbReference type="NCBIfam" id="NF003519">
    <property type="entry name" value="PRK05182.2-5"/>
    <property type="match status" value="1"/>
</dbReference>
<dbReference type="NCBIfam" id="TIGR02027">
    <property type="entry name" value="rpoA"/>
    <property type="match status" value="1"/>
</dbReference>
<dbReference type="Pfam" id="PF01000">
    <property type="entry name" value="RNA_pol_A_bac"/>
    <property type="match status" value="1"/>
</dbReference>
<dbReference type="Pfam" id="PF03118">
    <property type="entry name" value="RNA_pol_A_CTD"/>
    <property type="match status" value="1"/>
</dbReference>
<dbReference type="Pfam" id="PF01193">
    <property type="entry name" value="RNA_pol_L"/>
    <property type="match status" value="1"/>
</dbReference>
<dbReference type="SMART" id="SM00662">
    <property type="entry name" value="RPOLD"/>
    <property type="match status" value="1"/>
</dbReference>
<dbReference type="SUPFAM" id="SSF47789">
    <property type="entry name" value="C-terminal domain of RNA polymerase alpha subunit"/>
    <property type="match status" value="1"/>
</dbReference>
<dbReference type="SUPFAM" id="SSF56553">
    <property type="entry name" value="Insert subdomain of RNA polymerase alpha subunit"/>
    <property type="match status" value="1"/>
</dbReference>
<dbReference type="SUPFAM" id="SSF55257">
    <property type="entry name" value="RBP11-like subunits of RNA polymerase"/>
    <property type="match status" value="1"/>
</dbReference>
<gene>
    <name evidence="1" type="primary">rpoA</name>
</gene>
<geneLocation type="chloroplast"/>
<keyword id="KW-0150">Chloroplast</keyword>
<keyword id="KW-0240">DNA-directed RNA polymerase</keyword>
<keyword id="KW-0548">Nucleotidyltransferase</keyword>
<keyword id="KW-0934">Plastid</keyword>
<keyword id="KW-0804">Transcription</keyword>
<keyword id="KW-0808">Transferase</keyword>
<protein>
    <recommendedName>
        <fullName evidence="1">DNA-directed RNA polymerase subunit alpha</fullName>
        <shortName evidence="1">PEP</shortName>
        <ecNumber evidence="1">2.7.7.6</ecNumber>
    </recommendedName>
    <alternativeName>
        <fullName evidence="1">Plastid-encoded RNA polymerase subunit alpha</fullName>
        <shortName evidence="1">RNA polymerase subunit alpha</shortName>
    </alternativeName>
</protein>